<name>KITH_STRT1</name>
<organism>
    <name type="scientific">Streptococcus thermophilus (strain CNRZ 1066)</name>
    <dbReference type="NCBI Taxonomy" id="299768"/>
    <lineage>
        <taxon>Bacteria</taxon>
        <taxon>Bacillati</taxon>
        <taxon>Bacillota</taxon>
        <taxon>Bacilli</taxon>
        <taxon>Lactobacillales</taxon>
        <taxon>Streptococcaceae</taxon>
        <taxon>Streptococcus</taxon>
    </lineage>
</organism>
<feature type="chain" id="PRO_0000175038" description="Thymidine kinase">
    <location>
        <begin position="1"/>
        <end position="196"/>
    </location>
</feature>
<feature type="active site" description="Proton acceptor" evidence="1">
    <location>
        <position position="86"/>
    </location>
</feature>
<feature type="binding site" evidence="1">
    <location>
        <begin position="9"/>
        <end position="16"/>
    </location>
    <ligand>
        <name>ATP</name>
        <dbReference type="ChEBI" id="CHEBI:30616"/>
    </ligand>
</feature>
<feature type="binding site" evidence="1">
    <location>
        <begin position="85"/>
        <end position="88"/>
    </location>
    <ligand>
        <name>ATP</name>
        <dbReference type="ChEBI" id="CHEBI:30616"/>
    </ligand>
</feature>
<feature type="binding site" evidence="1">
    <location>
        <position position="143"/>
    </location>
    <ligand>
        <name>Zn(2+)</name>
        <dbReference type="ChEBI" id="CHEBI:29105"/>
    </ligand>
</feature>
<feature type="binding site" evidence="1">
    <location>
        <position position="146"/>
    </location>
    <ligand>
        <name>Zn(2+)</name>
        <dbReference type="ChEBI" id="CHEBI:29105"/>
    </ligand>
</feature>
<feature type="binding site" evidence="1">
    <location>
        <position position="180"/>
    </location>
    <ligand>
        <name>Zn(2+)</name>
        <dbReference type="ChEBI" id="CHEBI:29105"/>
    </ligand>
</feature>
<feature type="binding site" evidence="1">
    <location>
        <position position="183"/>
    </location>
    <ligand>
        <name>Zn(2+)</name>
        <dbReference type="ChEBI" id="CHEBI:29105"/>
    </ligand>
</feature>
<gene>
    <name evidence="1" type="primary">tdk</name>
    <name type="ordered locus">str0751</name>
</gene>
<evidence type="ECO:0000255" key="1">
    <source>
        <dbReference type="HAMAP-Rule" id="MF_00124"/>
    </source>
</evidence>
<proteinExistence type="inferred from homology"/>
<sequence>MAQLYFRYGTMNSGKSIEILKVAYNYEEQGKPVVLLTSRLDDRDEVGYISSRIGMRRKAYPIGNDTDIFDYIDDISPRPYCVLIDEAQFLTRANVYDLARIVDELDIPVMAFGLKNDFQNNLFEGSKYLLLLSDKIEEIKTICHYCSRKATMVLRMEDGEPVYEGVQVQIGGHESYISVCRKHWFNPPRERIVPLK</sequence>
<dbReference type="EC" id="2.7.1.21" evidence="1"/>
<dbReference type="EMBL" id="CP000024">
    <property type="protein sequence ID" value="AAV62344.1"/>
    <property type="molecule type" value="Genomic_DNA"/>
</dbReference>
<dbReference type="RefSeq" id="WP_011227082.1">
    <property type="nucleotide sequence ID" value="NC_006449.1"/>
</dbReference>
<dbReference type="SMR" id="Q5M0B8"/>
<dbReference type="KEGG" id="stc:str0751"/>
<dbReference type="HOGENOM" id="CLU_064400_2_2_9"/>
<dbReference type="GO" id="GO:0005829">
    <property type="term" value="C:cytosol"/>
    <property type="evidence" value="ECO:0007669"/>
    <property type="project" value="TreeGrafter"/>
</dbReference>
<dbReference type="GO" id="GO:0005524">
    <property type="term" value="F:ATP binding"/>
    <property type="evidence" value="ECO:0007669"/>
    <property type="project" value="UniProtKB-UniRule"/>
</dbReference>
<dbReference type="GO" id="GO:0004797">
    <property type="term" value="F:thymidine kinase activity"/>
    <property type="evidence" value="ECO:0007669"/>
    <property type="project" value="UniProtKB-UniRule"/>
</dbReference>
<dbReference type="GO" id="GO:0008270">
    <property type="term" value="F:zinc ion binding"/>
    <property type="evidence" value="ECO:0007669"/>
    <property type="project" value="UniProtKB-UniRule"/>
</dbReference>
<dbReference type="GO" id="GO:0071897">
    <property type="term" value="P:DNA biosynthetic process"/>
    <property type="evidence" value="ECO:0007669"/>
    <property type="project" value="UniProtKB-KW"/>
</dbReference>
<dbReference type="GO" id="GO:0046104">
    <property type="term" value="P:thymidine metabolic process"/>
    <property type="evidence" value="ECO:0007669"/>
    <property type="project" value="TreeGrafter"/>
</dbReference>
<dbReference type="Gene3D" id="3.30.60.20">
    <property type="match status" value="1"/>
</dbReference>
<dbReference type="Gene3D" id="3.40.50.300">
    <property type="entry name" value="P-loop containing nucleotide triphosphate hydrolases"/>
    <property type="match status" value="1"/>
</dbReference>
<dbReference type="HAMAP" id="MF_00124">
    <property type="entry name" value="Thymidine_kinase"/>
    <property type="match status" value="1"/>
</dbReference>
<dbReference type="InterPro" id="IPR027417">
    <property type="entry name" value="P-loop_NTPase"/>
</dbReference>
<dbReference type="InterPro" id="IPR001267">
    <property type="entry name" value="Thymidine_kinase"/>
</dbReference>
<dbReference type="InterPro" id="IPR020633">
    <property type="entry name" value="Thymidine_kinase_CS"/>
</dbReference>
<dbReference type="NCBIfam" id="NF003299">
    <property type="entry name" value="PRK04296.1-4"/>
    <property type="match status" value="1"/>
</dbReference>
<dbReference type="NCBIfam" id="NF003300">
    <property type="entry name" value="PRK04296.1-5"/>
    <property type="match status" value="1"/>
</dbReference>
<dbReference type="PANTHER" id="PTHR11441">
    <property type="entry name" value="THYMIDINE KINASE"/>
    <property type="match status" value="1"/>
</dbReference>
<dbReference type="PANTHER" id="PTHR11441:SF0">
    <property type="entry name" value="THYMIDINE KINASE, CYTOSOLIC"/>
    <property type="match status" value="1"/>
</dbReference>
<dbReference type="Pfam" id="PF00265">
    <property type="entry name" value="TK"/>
    <property type="match status" value="1"/>
</dbReference>
<dbReference type="PIRSF" id="PIRSF035805">
    <property type="entry name" value="TK_cell"/>
    <property type="match status" value="1"/>
</dbReference>
<dbReference type="SUPFAM" id="SSF57716">
    <property type="entry name" value="Glucocorticoid receptor-like (DNA-binding domain)"/>
    <property type="match status" value="1"/>
</dbReference>
<dbReference type="SUPFAM" id="SSF52540">
    <property type="entry name" value="P-loop containing nucleoside triphosphate hydrolases"/>
    <property type="match status" value="1"/>
</dbReference>
<dbReference type="PROSITE" id="PS00603">
    <property type="entry name" value="TK_CELLULAR_TYPE"/>
    <property type="match status" value="1"/>
</dbReference>
<keyword id="KW-0067">ATP-binding</keyword>
<keyword id="KW-0963">Cytoplasm</keyword>
<keyword id="KW-0237">DNA synthesis</keyword>
<keyword id="KW-0418">Kinase</keyword>
<keyword id="KW-0479">Metal-binding</keyword>
<keyword id="KW-0547">Nucleotide-binding</keyword>
<keyword id="KW-0808">Transferase</keyword>
<keyword id="KW-0862">Zinc</keyword>
<accession>Q5M0B8</accession>
<comment type="catalytic activity">
    <reaction evidence="1">
        <text>thymidine + ATP = dTMP + ADP + H(+)</text>
        <dbReference type="Rhea" id="RHEA:19129"/>
        <dbReference type="ChEBI" id="CHEBI:15378"/>
        <dbReference type="ChEBI" id="CHEBI:17748"/>
        <dbReference type="ChEBI" id="CHEBI:30616"/>
        <dbReference type="ChEBI" id="CHEBI:63528"/>
        <dbReference type="ChEBI" id="CHEBI:456216"/>
        <dbReference type="EC" id="2.7.1.21"/>
    </reaction>
</comment>
<comment type="subunit">
    <text evidence="1">Homotetramer.</text>
</comment>
<comment type="subcellular location">
    <subcellularLocation>
        <location evidence="1">Cytoplasm</location>
    </subcellularLocation>
</comment>
<comment type="similarity">
    <text evidence="1">Belongs to the thymidine kinase family.</text>
</comment>
<protein>
    <recommendedName>
        <fullName evidence="1">Thymidine kinase</fullName>
        <ecNumber evidence="1">2.7.1.21</ecNumber>
    </recommendedName>
</protein>
<reference key="1">
    <citation type="journal article" date="2004" name="Nat. Biotechnol.">
        <title>Complete sequence and comparative genome analysis of the dairy bacterium Streptococcus thermophilus.</title>
        <authorList>
            <person name="Bolotin A."/>
            <person name="Quinquis B."/>
            <person name="Renault P."/>
            <person name="Sorokin A."/>
            <person name="Ehrlich S.D."/>
            <person name="Kulakauskas S."/>
            <person name="Lapidus A."/>
            <person name="Goltsman E."/>
            <person name="Mazur M."/>
            <person name="Pusch G.D."/>
            <person name="Fonstein M."/>
            <person name="Overbeek R."/>
            <person name="Kyprides N."/>
            <person name="Purnelle B."/>
            <person name="Prozzi D."/>
            <person name="Ngui K."/>
            <person name="Masuy D."/>
            <person name="Hancy F."/>
            <person name="Burteau S."/>
            <person name="Boutry M."/>
            <person name="Delcour J."/>
            <person name="Goffeau A."/>
            <person name="Hols P."/>
        </authorList>
    </citation>
    <scope>NUCLEOTIDE SEQUENCE [LARGE SCALE GENOMIC DNA]</scope>
    <source>
        <strain>CNRZ 1066</strain>
    </source>
</reference>